<keyword id="KW-0044">Antibiotic</keyword>
<keyword id="KW-0929">Antimicrobial</keyword>
<keyword id="KW-0211">Defensin</keyword>
<keyword id="KW-1015">Disulfide bond</keyword>
<keyword id="KW-0391">Immunity</keyword>
<keyword id="KW-0399">Innate immunity</keyword>
<keyword id="KW-0446">Lipid-binding</keyword>
<keyword id="KW-0472">Membrane</keyword>
<keyword id="KW-1185">Reference proteome</keyword>
<keyword id="KW-0964">Secreted</keyword>
<keyword id="KW-0732">Signal</keyword>
<keyword id="KW-1052">Target cell membrane</keyword>
<keyword id="KW-1053">Target membrane</keyword>
<feature type="signal peptide" evidence="3">
    <location>
        <begin position="1" status="less than"/>
        <end position="17"/>
    </location>
</feature>
<feature type="chain" id="PRO_5004199107" description="Hemocyte defensin Cg-Defh2">
    <location>
        <begin position="18"/>
        <end position="60"/>
    </location>
</feature>
<feature type="region of interest" description="Binds to membrane interface" evidence="2">
    <location>
        <begin position="22"/>
        <end position="25"/>
    </location>
</feature>
<feature type="region of interest" description="Binds to membrane interface" evidence="2">
    <location>
        <begin position="43"/>
        <end position="49"/>
    </location>
</feature>
<feature type="binding site" evidence="2">
    <location>
        <position position="19"/>
    </location>
    <ligand>
        <name>beta-D-GlcNAc-(1-&gt;4)-Mur2Ac(oyl-L-Ala-gamma-D-Glu-L-Lys-D-Ala-D-Ala)-di-trans,octa-cis-undecaprenyl diphosphate</name>
        <dbReference type="ChEBI" id="CHEBI:60033"/>
    </ligand>
</feature>
<feature type="binding site" evidence="2">
    <location>
        <position position="20"/>
    </location>
    <ligand>
        <name>beta-D-GlcNAc-(1-&gt;4)-Mur2Ac(oyl-L-Ala-gamma-D-Glu-L-Lys-D-Ala-D-Ala)-di-trans,octa-cis-undecaprenyl diphosphate</name>
        <dbReference type="ChEBI" id="CHEBI:60033"/>
    </ligand>
</feature>
<feature type="binding site" evidence="2">
    <location>
        <position position="21"/>
    </location>
    <ligand>
        <name>beta-D-GlcNAc-(1-&gt;4)-Mur2Ac(oyl-L-Ala-gamma-D-Glu-L-Lys-D-Ala-D-Ala)-di-trans,octa-cis-undecaprenyl diphosphate</name>
        <dbReference type="ChEBI" id="CHEBI:60033"/>
    </ligand>
</feature>
<feature type="binding site" evidence="2">
    <location>
        <position position="31"/>
    </location>
    <ligand>
        <name>beta-D-GlcNAc-(1-&gt;4)-Mur2Ac(oyl-L-Ala-gamma-D-Glu-L-Lys-D-Ala-D-Ala)-di-trans,octa-cis-undecaprenyl diphosphate</name>
        <dbReference type="ChEBI" id="CHEBI:60033"/>
    </ligand>
</feature>
<feature type="binding site" evidence="2">
    <location>
        <position position="51"/>
    </location>
    <ligand>
        <name>beta-D-GlcNAc-(1-&gt;4)-Mur2Ac(oyl-L-Ala-gamma-D-Glu-L-Lys-D-Ala-D-Ala)-di-trans,octa-cis-undecaprenyl diphosphate</name>
        <dbReference type="ChEBI" id="CHEBI:60033"/>
    </ligand>
</feature>
<feature type="disulfide bond" evidence="1">
    <location>
        <begin position="21"/>
        <end position="42"/>
    </location>
</feature>
<feature type="disulfide bond" evidence="1">
    <location>
        <begin position="28"/>
        <end position="51"/>
    </location>
</feature>
<feature type="disulfide bond" evidence="1">
    <location>
        <begin position="32"/>
        <end position="53"/>
    </location>
</feature>
<feature type="disulfide bond" evidence="1">
    <location>
        <begin position="37"/>
        <end position="56"/>
    </location>
</feature>
<feature type="non-terminal residue" evidence="8">
    <location>
        <position position="1"/>
    </location>
</feature>
<accession>Q20A05</accession>
<proteinExistence type="evidence at transcript level"/>
<name>DEFH2_MAGGI</name>
<evidence type="ECO:0000250" key="1">
    <source>
        <dbReference type="UniProtKB" id="Q4GWV4"/>
    </source>
</evidence>
<evidence type="ECO:0000250" key="2">
    <source>
        <dbReference type="UniProtKB" id="Q53I06"/>
    </source>
</evidence>
<evidence type="ECO:0000255" key="3"/>
<evidence type="ECO:0000269" key="4">
    <source>
    </source>
</evidence>
<evidence type="ECO:0000269" key="5">
    <source>
    </source>
</evidence>
<evidence type="ECO:0000303" key="6">
    <source>
    </source>
</evidence>
<evidence type="ECO:0000305" key="7"/>
<evidence type="ECO:0000305" key="8">
    <source>
    </source>
</evidence>
<organism>
    <name type="scientific">Magallana gigas</name>
    <name type="common">Pacific oyster</name>
    <name type="synonym">Crassostrea gigas</name>
    <dbReference type="NCBI Taxonomy" id="29159"/>
    <lineage>
        <taxon>Eukaryota</taxon>
        <taxon>Metazoa</taxon>
        <taxon>Spiralia</taxon>
        <taxon>Lophotrochozoa</taxon>
        <taxon>Mollusca</taxon>
        <taxon>Bivalvia</taxon>
        <taxon>Autobranchia</taxon>
        <taxon>Pteriomorphia</taxon>
        <taxon>Ostreida</taxon>
        <taxon>Ostreoidea</taxon>
        <taxon>Ostreidae</taxon>
        <taxon>Magallana</taxon>
    </lineage>
</organism>
<dbReference type="EMBL" id="DQ400102">
    <property type="protein sequence ID" value="ABD66302.1"/>
    <property type="molecule type" value="mRNA"/>
</dbReference>
<dbReference type="SMR" id="Q20A05"/>
<dbReference type="InParanoid" id="Q20A05"/>
<dbReference type="Proteomes" id="UP000005408">
    <property type="component" value="Unplaced"/>
</dbReference>
<dbReference type="GO" id="GO:0005576">
    <property type="term" value="C:extracellular region"/>
    <property type="evidence" value="ECO:0007669"/>
    <property type="project" value="UniProtKB-SubCell"/>
</dbReference>
<dbReference type="GO" id="GO:0016020">
    <property type="term" value="C:membrane"/>
    <property type="evidence" value="ECO:0007669"/>
    <property type="project" value="UniProtKB-KW"/>
</dbReference>
<dbReference type="GO" id="GO:0044218">
    <property type="term" value="C:other organism cell membrane"/>
    <property type="evidence" value="ECO:0007669"/>
    <property type="project" value="UniProtKB-KW"/>
</dbReference>
<dbReference type="GO" id="GO:0008289">
    <property type="term" value="F:lipid binding"/>
    <property type="evidence" value="ECO:0007669"/>
    <property type="project" value="UniProtKB-KW"/>
</dbReference>
<dbReference type="GO" id="GO:0042742">
    <property type="term" value="P:defense response to bacterium"/>
    <property type="evidence" value="ECO:0007669"/>
    <property type="project" value="UniProtKB-KW"/>
</dbReference>
<dbReference type="GO" id="GO:0045087">
    <property type="term" value="P:innate immune response"/>
    <property type="evidence" value="ECO:0007669"/>
    <property type="project" value="UniProtKB-KW"/>
</dbReference>
<dbReference type="Gene3D" id="3.30.30.10">
    <property type="entry name" value="Knottin, scorpion toxin-like"/>
    <property type="match status" value="1"/>
</dbReference>
<dbReference type="InterPro" id="IPR001542">
    <property type="entry name" value="Defensin_invertebrate/fungal"/>
</dbReference>
<dbReference type="InterPro" id="IPR036574">
    <property type="entry name" value="Scorpion_toxin-like_sf"/>
</dbReference>
<dbReference type="Pfam" id="PF01097">
    <property type="entry name" value="Defensin_2"/>
    <property type="match status" value="1"/>
</dbReference>
<dbReference type="SUPFAM" id="SSF57095">
    <property type="entry name" value="Scorpion toxin-like"/>
    <property type="match status" value="1"/>
</dbReference>
<dbReference type="PROSITE" id="PS51378">
    <property type="entry name" value="INVERT_DEFENSINS"/>
    <property type="match status" value="1"/>
</dbReference>
<reference key="1">
    <citation type="journal article" date="2007" name="Dev. Comp. Immunol.">
        <title>Molecular characterization of two isoforms of defensin from hemocytes of the oyster Crassostrea gigas.</title>
        <authorList>
            <person name="Gonzalez M."/>
            <person name="Gueguen Y."/>
            <person name="Desserre G."/>
            <person name="de Lorgeril J."/>
            <person name="Romestand B."/>
            <person name="Bachere E."/>
        </authorList>
    </citation>
    <scope>NUCLEOTIDE SEQUENCE [MRNA]</scope>
    <scope>TISSUE SPECIFICITY</scope>
    <scope>INDUCTION BY BACTERIA</scope>
    <source>
        <strain>280406</strain>
        <tissue>Hemocyte</tissue>
    </source>
</reference>
<reference key="2">
    <citation type="journal article" date="2010" name="J. Biol. Chem.">
        <title>Insight into invertebrate defensin mechanism of action: oyster defensins inhibit peptidoglycan biosynthesis by binding to lipid II.</title>
        <authorList>
            <person name="Schmitt P."/>
            <person name="Wilmes M."/>
            <person name="Pugniere M."/>
            <person name="Aumelas A."/>
            <person name="Bachere E."/>
            <person name="Sahl H.G."/>
            <person name="Schneider T."/>
            <person name="Destoumieux-Garzon D."/>
        </authorList>
    </citation>
    <scope>FUNCTION</scope>
    <scope>3D-STRUCTURE MODELING</scope>
</reference>
<sequence length="60" mass="6439">LLTLAVLLMVSADMAFAGFGCPGDQYECNRHCRSIGCRAGYCDAVTLWLRCTCTGCSGKK</sequence>
<protein>
    <recommendedName>
        <fullName evidence="6">Hemocyte defensin Cg-Defh2</fullName>
    </recommendedName>
</protein>
<comment type="function">
    <text evidence="5">Antibacterial peptide mostly active against Gram-positive bacteria (PubMed:20605792). It acts by selectively inhibiting peptidoglycan biosynthesis through complex formation with the cell wall precursor lipid II (1:1 molar ratio) thus inhibiting cell wall synthesis (PubMed:20605792). It does not disrupt cell membranes (PubMed:20605792). Is noticeably more potent than Cg-Defh1 (PubMed:20605792).</text>
</comment>
<comment type="subcellular location">
    <subcellularLocation>
        <location evidence="7">Secreted</location>
    </subcellularLocation>
    <subcellularLocation>
        <location evidence="2">Target cell membrane</location>
    </subcellularLocation>
</comment>
<comment type="tissue specificity">
    <text evidence="4">Expressed in hemocytes.</text>
</comment>
<comment type="induction">
    <text evidence="4">After a bacterial challenge, the level of transcripts decreases dramatically in the circulating hemocytes. This decrease can be correlated with an increase of transcripts in the gill and the mantle tissue, suggesting a possible migration of the hemocytes expressing Cg-defh2 towards the tissues implicated in the first defense barrier of the oyster.</text>
</comment>
<comment type="domain">
    <text evidence="1">Has the structural arrangement of an alpha-helix connected to a beta-sheet by disulfide bonds (CSalpha/beta).</text>
</comment>
<comment type="similarity">
    <text evidence="7">Belongs to the invertebrate defensin family.</text>
</comment>
<comment type="online information" name="The antimicrobial peptide database">
    <link uri="https://wangapd3.com/database/query_output.php?ID=02618"/>
</comment>